<sequence length="370" mass="43088">MAVTVEEAPWLGWIVAKALMRFAFMVANNLVAIPSYICYVIILQPLRVLDSKRFWYIEGLMYKWLLGMVASWGWYAGYTVMEWGEDIKAIAKDEAVMLVNHQATGDVCTLMMCLQDKGPVVAQMMWLMDHIFKYTNFGIVSLIHGDFFIRQGRAYRDQQLLVLKKHLEHNYRSRDRKWIVLFPEGGFLRKRRETSQAFAKKNNLPFLTHVTLPRFGATNIILKALVARQENGSPAGGDARGLECKSRGLQWIIDTTIAYPKAEPIDIQTWILGYRKPTVTHVHYRIFPIGDVPLETEDLTSWLYQRFIEKEDLLSHFYKTGAFPPPQGQKEAVCREMTLSNMWIFLIQSFAFLSGYLWYHIIQYFYHCLF</sequence>
<feature type="chain" id="PRO_0000208205" description="Acyl-CoA:lysophosphatidylglycerol acyltransferase 1">
    <location>
        <begin position="1"/>
        <end position="370"/>
    </location>
</feature>
<feature type="transmembrane region" description="Helical" evidence="3">
    <location>
        <begin position="22"/>
        <end position="42"/>
    </location>
</feature>
<feature type="transmembrane region" description="Helical" evidence="3">
    <location>
        <begin position="342"/>
        <end position="362"/>
    </location>
</feature>
<feature type="short sequence motif" description="HXXXXD motif">
    <location>
        <begin position="101"/>
        <end position="106"/>
    </location>
</feature>
<reference key="1">
    <citation type="journal article" date="2010" name="J. Lipid Res.">
        <title>Novel acyl-coenzyme A:monoacylglycerol acyltransferase plays an important role in hepatic triacylglycerol secretion.</title>
        <authorList>
            <person name="Hiramine Y."/>
            <person name="Emoto H."/>
            <person name="Takasuga S."/>
            <person name="Hiramatsu R."/>
        </authorList>
    </citation>
    <scope>NUCLEOTIDE SEQUENCE [MRNA]</scope>
    <scope>FUNCTION</scope>
    <scope>TISSUE SPECIFICITY</scope>
    <scope>CATALYTIC ACTIVITY</scope>
</reference>
<reference key="2">
    <citation type="journal article" date="2004" name="Genome Res.">
        <title>The status, quality, and expansion of the NIH full-length cDNA project: the Mammalian Gene Collection (MGC).</title>
        <authorList>
            <consortium name="The MGC Project Team"/>
        </authorList>
    </citation>
    <scope>NUCLEOTIDE SEQUENCE [LARGE SCALE MRNA]</scope>
</reference>
<reference key="3">
    <citation type="journal article" date="2010" name="Cell">
        <title>A tissue-specific atlas of mouse protein phosphorylation and expression.</title>
        <authorList>
            <person name="Huttlin E.L."/>
            <person name="Jedrychowski M.P."/>
            <person name="Elias J.E."/>
            <person name="Goswami T."/>
            <person name="Rad R."/>
            <person name="Beausoleil S.A."/>
            <person name="Villen J."/>
            <person name="Haas W."/>
            <person name="Sowa M.E."/>
            <person name="Gygi S.P."/>
        </authorList>
    </citation>
    <scope>IDENTIFICATION BY MASS SPECTROMETRY [LARGE SCALE ANALYSIS]</scope>
    <source>
        <tissue>Brain</tissue>
        <tissue>Brown adipose tissue</tissue>
        <tissue>Kidney</tissue>
        <tissue>Lung</tissue>
        <tissue>Testis</tissue>
    </source>
</reference>
<reference key="4">
    <citation type="journal article" date="2022" name="J. Biol. Chem.">
        <title>LPGAT1 controls the stearate/palmitate ratio of phosphatidylethanolamine and phosphatidylcholine in sn-1 specific remodeling.</title>
        <authorList>
            <person name="Xu Y."/>
            <person name="Miller P.C."/>
            <person name="Phoon C.K.L."/>
            <person name="Ren M."/>
            <person name="Nargis T."/>
            <person name="Rajan S."/>
            <person name="Hussain M.M."/>
            <person name="Schlame M."/>
        </authorList>
    </citation>
    <scope>FUNCTION</scope>
    <scope>CATALYTIC ACTIVITY</scope>
    <scope>DISRUPTION PHENOTYPE</scope>
    <scope>TISSUE SPECIFICITY</scope>
</reference>
<reference key="5">
    <citation type="journal article" date="2022" name="J. Biol. Chem.">
        <title>Update and nomenclature proposal for mammalian lysophospholipid acyltransferases, which create membrane phospholipid diversity.</title>
        <authorList>
            <person name="Valentine W.J."/>
            <person name="Yanagida K."/>
            <person name="Kawana H."/>
            <person name="Kono N."/>
            <person name="Noda N.N."/>
            <person name="Aoki J."/>
            <person name="Shindou H."/>
        </authorList>
    </citation>
    <scope>NOMENCLATURE</scope>
</reference>
<reference key="6">
    <citation type="journal article" date="2022" name="J. Lipid Res.">
        <title>Identification and characterization of LPLAT7 as an sn-1-specific lysophospholipid acyltransferase.</title>
        <authorList>
            <person name="Kawana H."/>
            <person name="Ozawa M."/>
            <person name="Shibata T."/>
            <person name="Onishi H."/>
            <person name="Sato Y."/>
            <person name="Kano K."/>
            <person name="Shindou H."/>
            <person name="Shimizu T."/>
            <person name="Kono N."/>
            <person name="Aoki J."/>
        </authorList>
    </citation>
    <scope>FUNCTION</scope>
    <scope>CATALYTIC ACTIVITY</scope>
</reference>
<keyword id="KW-0012">Acyltransferase</keyword>
<keyword id="KW-0256">Endoplasmic reticulum</keyword>
<keyword id="KW-0444">Lipid biosynthesis</keyword>
<keyword id="KW-0443">Lipid metabolism</keyword>
<keyword id="KW-0472">Membrane</keyword>
<keyword id="KW-0594">Phospholipid biosynthesis</keyword>
<keyword id="KW-1208">Phospholipid metabolism</keyword>
<keyword id="KW-1185">Reference proteome</keyword>
<keyword id="KW-0808">Transferase</keyword>
<keyword id="KW-0812">Transmembrane</keyword>
<keyword id="KW-1133">Transmembrane helix</keyword>
<name>LGAT1_MOUSE</name>
<accession>Q91YX5</accession>
<dbReference type="EC" id="2.3.1.62" evidence="6"/>
<dbReference type="EC" id="2.3.1.22" evidence="4"/>
<dbReference type="EC" id="2.3.1.-" evidence="5"/>
<dbReference type="EMBL" id="BC013667">
    <property type="protein sequence ID" value="AAH13667.1"/>
    <property type="molecule type" value="mRNA"/>
</dbReference>
<dbReference type="CCDS" id="CCDS15622.1"/>
<dbReference type="RefSeq" id="NP_001408073.1">
    <property type="nucleotide sequence ID" value="NM_001421144.1"/>
</dbReference>
<dbReference type="RefSeq" id="NP_001408074.1">
    <property type="nucleotide sequence ID" value="NM_001421145.1"/>
</dbReference>
<dbReference type="RefSeq" id="NP_001408075.1">
    <property type="nucleotide sequence ID" value="NM_001421146.1"/>
</dbReference>
<dbReference type="RefSeq" id="NP_758470.1">
    <property type="nucleotide sequence ID" value="NM_172266.4"/>
</dbReference>
<dbReference type="RefSeq" id="XP_006497218.1">
    <property type="nucleotide sequence ID" value="XM_006497155.3"/>
</dbReference>
<dbReference type="RefSeq" id="XP_006497219.1">
    <property type="nucleotide sequence ID" value="XM_006497156.3"/>
</dbReference>
<dbReference type="BioGRID" id="230563">
    <property type="interactions" value="5"/>
</dbReference>
<dbReference type="FunCoup" id="Q91YX5">
    <property type="interactions" value="1441"/>
</dbReference>
<dbReference type="STRING" id="10090.ENSMUSP00000106480"/>
<dbReference type="GlyGen" id="Q91YX5">
    <property type="glycosylation" value="1 site, 1 N-linked glycan (1 site)"/>
</dbReference>
<dbReference type="iPTMnet" id="Q91YX5"/>
<dbReference type="PhosphoSitePlus" id="Q91YX5"/>
<dbReference type="SwissPalm" id="Q91YX5"/>
<dbReference type="jPOST" id="Q91YX5"/>
<dbReference type="PaxDb" id="10090-ENSMUSP00000106480"/>
<dbReference type="ProteomicsDB" id="265065"/>
<dbReference type="Pumba" id="Q91YX5"/>
<dbReference type="Antibodypedia" id="1888">
    <property type="antibodies" value="88 antibodies from 23 providers"/>
</dbReference>
<dbReference type="DNASU" id="226856"/>
<dbReference type="Ensembl" id="ENSMUST00000110855.8">
    <property type="protein sequence ID" value="ENSMUSP00000106479.2"/>
    <property type="gene ID" value="ENSMUSG00000026623.17"/>
</dbReference>
<dbReference type="GeneID" id="226856"/>
<dbReference type="KEGG" id="mmu:226856"/>
<dbReference type="UCSC" id="uc007ecs.3">
    <property type="organism name" value="mouse"/>
</dbReference>
<dbReference type="AGR" id="MGI:2446186"/>
<dbReference type="CTD" id="9926"/>
<dbReference type="MGI" id="MGI:2446186">
    <property type="gene designation" value="Lpgat1"/>
</dbReference>
<dbReference type="VEuPathDB" id="HostDB:ENSMUSG00000026623"/>
<dbReference type="eggNOG" id="KOG1505">
    <property type="taxonomic scope" value="Eukaryota"/>
</dbReference>
<dbReference type="GeneTree" id="ENSGT00950000182836"/>
<dbReference type="HOGENOM" id="CLU_046804_2_0_1"/>
<dbReference type="InParanoid" id="Q91YX5"/>
<dbReference type="OrthoDB" id="5920068at2759"/>
<dbReference type="PhylomeDB" id="Q91YX5"/>
<dbReference type="Reactome" id="R-MMU-1482925">
    <property type="pathway name" value="Acyl chain remodelling of PG"/>
</dbReference>
<dbReference type="BioGRID-ORCS" id="226856">
    <property type="hits" value="4 hits in 79 CRISPR screens"/>
</dbReference>
<dbReference type="ChiTaRS" id="Lpgat1">
    <property type="organism name" value="mouse"/>
</dbReference>
<dbReference type="PRO" id="PR:Q91YX5"/>
<dbReference type="Proteomes" id="UP000000589">
    <property type="component" value="Chromosome 1"/>
</dbReference>
<dbReference type="RNAct" id="Q91YX5">
    <property type="molecule type" value="protein"/>
</dbReference>
<dbReference type="Bgee" id="ENSMUSG00000026623">
    <property type="expression patterns" value="Expressed in rostral migratory stream and 258 other cell types or tissues"/>
</dbReference>
<dbReference type="ExpressionAtlas" id="Q91YX5">
    <property type="expression patterns" value="baseline and differential"/>
</dbReference>
<dbReference type="GO" id="GO:0005789">
    <property type="term" value="C:endoplasmic reticulum membrane"/>
    <property type="evidence" value="ECO:0000250"/>
    <property type="project" value="UniProtKB"/>
</dbReference>
<dbReference type="GO" id="GO:0003846">
    <property type="term" value="F:2-acylglycerol O-acyltransferase activity"/>
    <property type="evidence" value="ECO:0000314"/>
    <property type="project" value="UniProtKB"/>
</dbReference>
<dbReference type="GO" id="GO:0047190">
    <property type="term" value="F:2-acylglycerophosphocholine O-acyltransferase activity"/>
    <property type="evidence" value="ECO:0000314"/>
    <property type="project" value="UniProtKB"/>
</dbReference>
<dbReference type="GO" id="GO:0071618">
    <property type="term" value="F:lysophosphatidylethanolamine acyltransferase activity"/>
    <property type="evidence" value="ECO:0000314"/>
    <property type="project" value="UniProtKB"/>
</dbReference>
<dbReference type="GO" id="GO:0071617">
    <property type="term" value="F:lysophospholipid acyltransferase activity"/>
    <property type="evidence" value="ECO:0000314"/>
    <property type="project" value="UniProtKB"/>
</dbReference>
<dbReference type="GO" id="GO:0036152">
    <property type="term" value="P:phosphatidylethanolamine acyl-chain remodeling"/>
    <property type="evidence" value="ECO:0000314"/>
    <property type="project" value="UniProtKB"/>
</dbReference>
<dbReference type="GO" id="GO:0008654">
    <property type="term" value="P:phospholipid biosynthetic process"/>
    <property type="evidence" value="ECO:0007669"/>
    <property type="project" value="UniProtKB-KW"/>
</dbReference>
<dbReference type="GO" id="GO:0045723">
    <property type="term" value="P:positive regulation of fatty acid biosynthetic process"/>
    <property type="evidence" value="ECO:0007669"/>
    <property type="project" value="Ensembl"/>
</dbReference>
<dbReference type="GO" id="GO:0019432">
    <property type="term" value="P:triglyceride biosynthetic process"/>
    <property type="evidence" value="ECO:0000315"/>
    <property type="project" value="UniProtKB"/>
</dbReference>
<dbReference type="CDD" id="cd07990">
    <property type="entry name" value="LPLAT_LCLAT1-like"/>
    <property type="match status" value="1"/>
</dbReference>
<dbReference type="InterPro" id="IPR032098">
    <property type="entry name" value="Acyltransf_C"/>
</dbReference>
<dbReference type="InterPro" id="IPR002123">
    <property type="entry name" value="Plipid/glycerol_acylTrfase"/>
</dbReference>
<dbReference type="PANTHER" id="PTHR10983">
    <property type="entry name" value="1-ACYLGLYCEROL-3-PHOSPHATE ACYLTRANSFERASE-RELATED"/>
    <property type="match status" value="1"/>
</dbReference>
<dbReference type="PANTHER" id="PTHR10983:SF2">
    <property type="entry name" value="ACYL-COA:LYSOPHOSPHATIDYLGLYCEROL ACYLTRANSFERASE 1"/>
    <property type="match status" value="1"/>
</dbReference>
<dbReference type="Pfam" id="PF16076">
    <property type="entry name" value="Acyltransf_C"/>
    <property type="match status" value="1"/>
</dbReference>
<dbReference type="Pfam" id="PF01553">
    <property type="entry name" value="Acyltransferase"/>
    <property type="match status" value="1"/>
</dbReference>
<dbReference type="SMART" id="SM00563">
    <property type="entry name" value="PlsC"/>
    <property type="match status" value="1"/>
</dbReference>
<dbReference type="SUPFAM" id="SSF69593">
    <property type="entry name" value="Glycerol-3-phosphate (1)-acyltransferase"/>
    <property type="match status" value="1"/>
</dbReference>
<comment type="function">
    <text evidence="2 4 5 6">Lysophospholipid acyltransferase involved in fatty acyl chain remodeling of glycerophospholipids in the endoplasmic reticulum membrane (PubMed:35131264). Selectively catalyzes the transfer and esterification of saturated long-chain fatty acids from acyl-CoA to the sn-1 position of 1-lyso-2-acyl phosphatidylethanolamines (1-lyso-PE, LPE), with a preference for stearoyl CoA over palmitoyl CoA as acyl donor (PubMed:36049524). Acts in concert with an unknown phospholipase A1 to convert palmitate PE species into stearate ones. Provides substrates to the PE methylation pathway, controlling stearate/palmitate composition of PE and phosphatidylcholine (PC) species with an overall impact on de novo hepatic lipid synthesis, body fat content and life span (PubMed:35131264). Can acylate lysophosphatidylglycerols (LPG) using various saturated fatty acyl-CoAs as acyl donors (By similarity). Can also acylate monoacylglycerols with a preference for 2-monoacylglycerols over 1-monoacylglycerols (PubMed:20018982, PubMed:35131264). Has no activity toward lysophosphatidic acids (LPA) and lysophosphatidylcholines (LPC) (PubMed:35131264).</text>
</comment>
<comment type="catalytic activity">
    <reaction evidence="5">
        <text>a 2-acyl-sn-glycero-3-phosphoethanolamine + octadecanoyl-CoA = 1-octadecanoyl-2-acyl-sn-glycero-3-phosphoethanolamine + CoA</text>
        <dbReference type="Rhea" id="RHEA:70583"/>
        <dbReference type="ChEBI" id="CHEBI:57287"/>
        <dbReference type="ChEBI" id="CHEBI:57394"/>
        <dbReference type="ChEBI" id="CHEBI:65213"/>
        <dbReference type="ChEBI" id="CHEBI:189703"/>
    </reaction>
    <physiologicalReaction direction="left-to-right" evidence="11">
        <dbReference type="Rhea" id="RHEA:70584"/>
    </physiologicalReaction>
</comment>
<comment type="catalytic activity">
    <reaction evidence="5">
        <text>2-(9Z-octadecenoyl)-sn-glycero-3-phosphoethanolamine + octadecanoyl-CoA = 1-octadecanoyl-2-(9Z-octadecenoyl)-sn-glycero-3-phosphoethanolamine + CoA</text>
        <dbReference type="Rhea" id="RHEA:70579"/>
        <dbReference type="ChEBI" id="CHEBI:57287"/>
        <dbReference type="ChEBI" id="CHEBI:57394"/>
        <dbReference type="ChEBI" id="CHEBI:75038"/>
        <dbReference type="ChEBI" id="CHEBI:76088"/>
    </reaction>
    <physiologicalReaction direction="left-to-right" evidence="11">
        <dbReference type="Rhea" id="RHEA:70580"/>
    </physiologicalReaction>
</comment>
<comment type="catalytic activity">
    <reaction evidence="5">
        <text>a 2-acyl-sn-glycero-3-phosphoethanolamine + hexadecanoyl-CoA = 1-hexadecanoyl-2-acyl-sn-glycero-3-phosphoethanolamine + CoA</text>
        <dbReference type="Rhea" id="RHEA:70595"/>
        <dbReference type="ChEBI" id="CHEBI:57287"/>
        <dbReference type="ChEBI" id="CHEBI:57379"/>
        <dbReference type="ChEBI" id="CHEBI:65213"/>
        <dbReference type="ChEBI" id="CHEBI:77370"/>
    </reaction>
    <physiologicalReaction direction="left-to-right" evidence="11">
        <dbReference type="Rhea" id="RHEA:70596"/>
    </physiologicalReaction>
</comment>
<comment type="catalytic activity">
    <reaction evidence="5 6">
        <text>2-(9Z-octadecenoyl)-sn-glycero-3-phosphoethanolamine + hexadecanoyl-CoA = 1-hexadecanoyl-2-(9Z-octadecenoyl)-sn-glycero-3-phosphoethanolamine + CoA</text>
        <dbReference type="Rhea" id="RHEA:70591"/>
        <dbReference type="ChEBI" id="CHEBI:57287"/>
        <dbReference type="ChEBI" id="CHEBI:57379"/>
        <dbReference type="ChEBI" id="CHEBI:73007"/>
        <dbReference type="ChEBI" id="CHEBI:76088"/>
    </reaction>
    <physiologicalReaction direction="left-to-right" evidence="11">
        <dbReference type="Rhea" id="RHEA:70592"/>
    </physiologicalReaction>
</comment>
<comment type="catalytic activity">
    <reaction evidence="2">
        <text>1-tetradecanoyl-sn-glycero-3-phospho-(1'-sn-glycerol) + hexadecanoyl-CoA = 1-tetradecanoyl-2-hexadecanoyl-sn-glycero-3-phospho-(1'-sn-glycerol) + CoA</text>
        <dbReference type="Rhea" id="RHEA:35855"/>
        <dbReference type="ChEBI" id="CHEBI:57287"/>
        <dbReference type="ChEBI" id="CHEBI:57379"/>
        <dbReference type="ChEBI" id="CHEBI:72826"/>
        <dbReference type="ChEBI" id="CHEBI:72830"/>
    </reaction>
    <physiologicalReaction direction="left-to-right" evidence="2">
        <dbReference type="Rhea" id="RHEA:35856"/>
    </physiologicalReaction>
</comment>
<comment type="catalytic activity">
    <reaction evidence="2">
        <text>1-hexadecanoyl-sn-glycero-3-phospho-(1'-sn-glycerol) + dodecanoyl-CoA = 1-hexadecanoyl-2-dodecanoyl-sn-glycero-3-phospho-(1'-sn-glycerol) + CoA</text>
        <dbReference type="Rhea" id="RHEA:40107"/>
        <dbReference type="ChEBI" id="CHEBI:57287"/>
        <dbReference type="ChEBI" id="CHEBI:57375"/>
        <dbReference type="ChEBI" id="CHEBI:75158"/>
        <dbReference type="ChEBI" id="CHEBI:77001"/>
    </reaction>
    <physiologicalReaction direction="left-to-right" evidence="2">
        <dbReference type="Rhea" id="RHEA:40108"/>
    </physiologicalReaction>
</comment>
<comment type="catalytic activity">
    <reaction evidence="2">
        <text>1-hexadecanoyl-sn-glycero-3-phospho-(1'-sn-glycerol) + hexadecanoyl-CoA = 1,2-dihexadecanoyl-sn-glycero-3-phospho-(1'-sn-glycerol) + CoA</text>
        <dbReference type="Rhea" id="RHEA:35851"/>
        <dbReference type="ChEBI" id="CHEBI:57287"/>
        <dbReference type="ChEBI" id="CHEBI:57379"/>
        <dbReference type="ChEBI" id="CHEBI:72829"/>
        <dbReference type="ChEBI" id="CHEBI:75158"/>
    </reaction>
    <physiologicalReaction direction="left-to-right" evidence="2">
        <dbReference type="Rhea" id="RHEA:35852"/>
    </physiologicalReaction>
</comment>
<comment type="catalytic activity">
    <reaction evidence="2">
        <text>1-hexadecanoyl-sn-glycero-3-phospho-(1'-sn-glycerol) + octadecanoyl-CoA = 1-hexadecanoyl-2-octadecanoyl-sn-glycero-3-phospho-(1'-sn-glycerol) + CoA</text>
        <dbReference type="Rhea" id="RHEA:35887"/>
        <dbReference type="ChEBI" id="CHEBI:57287"/>
        <dbReference type="ChEBI" id="CHEBI:57394"/>
        <dbReference type="ChEBI" id="CHEBI:72839"/>
        <dbReference type="ChEBI" id="CHEBI:75158"/>
    </reaction>
    <physiologicalReaction direction="left-to-right" evidence="2">
        <dbReference type="Rhea" id="RHEA:35888"/>
    </physiologicalReaction>
</comment>
<comment type="catalytic activity">
    <reaction evidence="2">
        <text>1-octadecanoyl-sn-glycero-3-phospho-(1'-sn-glycerol) + hexadecanoyl-CoA = 1-octadecanoyl-2-hexadecanoyl-sn-glycero-3-phospho-(1'-sn-glycerol) + CoA</text>
        <dbReference type="Rhea" id="RHEA:35859"/>
        <dbReference type="ChEBI" id="CHEBI:57287"/>
        <dbReference type="ChEBI" id="CHEBI:57379"/>
        <dbReference type="ChEBI" id="CHEBI:72827"/>
        <dbReference type="ChEBI" id="CHEBI:72831"/>
    </reaction>
    <physiologicalReaction direction="left-to-right" evidence="2">
        <dbReference type="Rhea" id="RHEA:35860"/>
    </physiologicalReaction>
</comment>
<comment type="catalytic activity">
    <reaction evidence="2">
        <text>1-(9Z-octadecenoyl)-sn-glycero-3-phospho-(1'-sn-glycerol) + dodecanoyl-CoA = 1-(9Z-octadecenoyl)-2-dodecanoyl-sn-glycero-3-phospho-(1'-sn-glycerol) + CoA</text>
        <dbReference type="Rhea" id="RHEA:40099"/>
        <dbReference type="ChEBI" id="CHEBI:57287"/>
        <dbReference type="ChEBI" id="CHEBI:57375"/>
        <dbReference type="ChEBI" id="CHEBI:72828"/>
        <dbReference type="ChEBI" id="CHEBI:77000"/>
    </reaction>
    <physiologicalReaction direction="left-to-right" evidence="2">
        <dbReference type="Rhea" id="RHEA:40100"/>
    </physiologicalReaction>
</comment>
<comment type="catalytic activity">
    <reaction evidence="2">
        <text>1-hexadecanoyl-sn-glycero-3-phospho-(1'-sn-glycerol) + (9Z)-octadecenoyl-CoA = 1-hexadecanoyl-2-(9Z-octadecenoyl)-sn-glycero-3-phospho-(1'-sn-glycerol) + CoA</text>
        <dbReference type="Rhea" id="RHEA:35891"/>
        <dbReference type="ChEBI" id="CHEBI:57287"/>
        <dbReference type="ChEBI" id="CHEBI:57387"/>
        <dbReference type="ChEBI" id="CHEBI:72841"/>
        <dbReference type="ChEBI" id="CHEBI:75158"/>
    </reaction>
    <physiologicalReaction direction="left-to-right" evidence="2">
        <dbReference type="Rhea" id="RHEA:35892"/>
    </physiologicalReaction>
</comment>
<comment type="catalytic activity">
    <reaction evidence="2">
        <text>1-(9Z-octadecenoyl)-sn-glycero-3-phospho-(1'-sn-glycerol) + hexadecanoyl-CoA = 1-(9Z-octadecenoyl)-2-hexadecanoyl-sn-glycero-3-phospho-(1'-sn-glycerol) + CoA</text>
        <dbReference type="Rhea" id="RHEA:35863"/>
        <dbReference type="ChEBI" id="CHEBI:57287"/>
        <dbReference type="ChEBI" id="CHEBI:57379"/>
        <dbReference type="ChEBI" id="CHEBI:72828"/>
        <dbReference type="ChEBI" id="CHEBI:72832"/>
    </reaction>
    <physiologicalReaction direction="left-to-right" evidence="2">
        <dbReference type="Rhea" id="RHEA:35864"/>
    </physiologicalReaction>
</comment>
<comment type="catalytic activity">
    <reaction evidence="2">
        <text>1-(9Z-octadecenoyl)-sn-glycero-3-phospho-(1'-sn-glycerol) + (9Z)-octadecenoyl-CoA = 1,2-di-(9Z-octadecenoyl)-sn-glycero-3-phospho-(1'-sn-glycerol) + CoA</text>
        <dbReference type="Rhea" id="RHEA:37651"/>
        <dbReference type="ChEBI" id="CHEBI:57287"/>
        <dbReference type="ChEBI" id="CHEBI:57387"/>
        <dbReference type="ChEBI" id="CHEBI:72828"/>
        <dbReference type="ChEBI" id="CHEBI:75163"/>
    </reaction>
    <physiologicalReaction direction="left-to-right" evidence="2">
        <dbReference type="Rhea" id="RHEA:37652"/>
    </physiologicalReaction>
</comment>
<comment type="catalytic activity">
    <reaction evidence="4">
        <text>a 2-acylglycerol + an acyl-CoA = a 1,2-diacylglycerol + CoA</text>
        <dbReference type="Rhea" id="RHEA:16741"/>
        <dbReference type="ChEBI" id="CHEBI:17389"/>
        <dbReference type="ChEBI" id="CHEBI:49172"/>
        <dbReference type="ChEBI" id="CHEBI:57287"/>
        <dbReference type="ChEBI" id="CHEBI:58342"/>
        <dbReference type="EC" id="2.3.1.22"/>
    </reaction>
    <physiologicalReaction direction="left-to-right" evidence="10">
        <dbReference type="Rhea" id="RHEA:16742"/>
    </physiologicalReaction>
</comment>
<comment type="catalytic activity">
    <reaction evidence="4">
        <text>a 2-acylglycerol + hexadecanoyl-CoA = a 1-hexadecanoyl-2-acylglycerol + CoA</text>
        <dbReference type="Rhea" id="RHEA:65096"/>
        <dbReference type="ChEBI" id="CHEBI:17389"/>
        <dbReference type="ChEBI" id="CHEBI:57287"/>
        <dbReference type="ChEBI" id="CHEBI:57379"/>
        <dbReference type="ChEBI" id="CHEBI:156324"/>
    </reaction>
    <physiologicalReaction direction="left-to-right" evidence="10">
        <dbReference type="Rhea" id="RHEA:65097"/>
    </physiologicalReaction>
</comment>
<comment type="catalytic activity">
    <reaction evidence="4">
        <text>a 1-acylglycerol + hexadecanoyl-CoA = an hexadecanoyl-acylglycerol + CoA</text>
        <dbReference type="Rhea" id="RHEA:65100"/>
        <dbReference type="ChEBI" id="CHEBI:35759"/>
        <dbReference type="ChEBI" id="CHEBI:57287"/>
        <dbReference type="ChEBI" id="CHEBI:57379"/>
        <dbReference type="ChEBI" id="CHEBI:156325"/>
    </reaction>
    <physiologicalReaction direction="left-to-right" evidence="10">
        <dbReference type="Rhea" id="RHEA:65101"/>
    </physiologicalReaction>
</comment>
<comment type="catalytic activity">
    <reaction evidence="6">
        <text>a 2-acyl-sn-glycero-3-phosphocholine + an acyl-CoA = a 1,2-diacyl-sn-glycero-3-phosphocholine + CoA</text>
        <dbReference type="Rhea" id="RHEA:10332"/>
        <dbReference type="ChEBI" id="CHEBI:57287"/>
        <dbReference type="ChEBI" id="CHEBI:57643"/>
        <dbReference type="ChEBI" id="CHEBI:57875"/>
        <dbReference type="ChEBI" id="CHEBI:58342"/>
        <dbReference type="EC" id="2.3.1.62"/>
    </reaction>
</comment>
<comment type="catalytic activity">
    <reaction evidence="2">
        <text>2-(9Z-octadecenoyl)-sn-glycero-3-phosphocholine + octadecanoyl-CoA = 1-octadecanoyl-2-(9Z-octadecenoyl)-sn-glycero-3-phosphocholine + CoA</text>
        <dbReference type="Rhea" id="RHEA:74799"/>
        <dbReference type="ChEBI" id="CHEBI:57287"/>
        <dbReference type="ChEBI" id="CHEBI:57394"/>
        <dbReference type="ChEBI" id="CHEBI:75034"/>
        <dbReference type="ChEBI" id="CHEBI:76071"/>
    </reaction>
</comment>
<comment type="catalytic activity">
    <reaction evidence="2">
        <text>2-(9Z,12Z-octadecadienoyl)-sn-glycero-3-phosphocholine + octadecanoyl-CoA = 1-octadecanoyl-2-(9Z,12Z)-octadecadienoyl-sn-glycero-3-phosphocholine + CoA</text>
        <dbReference type="Rhea" id="RHEA:74803"/>
        <dbReference type="ChEBI" id="CHEBI:57287"/>
        <dbReference type="ChEBI" id="CHEBI:57394"/>
        <dbReference type="ChEBI" id="CHEBI:76084"/>
        <dbReference type="ChEBI" id="CHEBI:84822"/>
    </reaction>
</comment>
<comment type="catalytic activity">
    <reaction evidence="2">
        <text>2-(5Z,8Z,11Z,14Z)-eicosatetraenoyl-sn-glycero-3-phosphocholine + octadecanoyl-CoA = 1-octadecanoyl-2-(5Z,8Z,11Z,14Z-eicosatetraenoyl)-sn-glycero-3-phosphocholine + CoA</text>
        <dbReference type="Rhea" id="RHEA:74807"/>
        <dbReference type="ChEBI" id="CHEBI:57287"/>
        <dbReference type="ChEBI" id="CHEBI:57394"/>
        <dbReference type="ChEBI" id="CHEBI:74965"/>
        <dbReference type="ChEBI" id="CHEBI:76079"/>
    </reaction>
</comment>
<comment type="catalytic activity">
    <reaction evidence="6">
        <text>2-(9Z-octadecenoyl)-sn-glycero-3-phosphocholine + hexadecanoyl-CoA = 1-hexadecanoyl-2-(9Z-octadecenoyl)-sn-glycero-3-phosphocholine + CoA</text>
        <dbReference type="Rhea" id="RHEA:74811"/>
        <dbReference type="ChEBI" id="CHEBI:57287"/>
        <dbReference type="ChEBI" id="CHEBI:57379"/>
        <dbReference type="ChEBI" id="CHEBI:73001"/>
        <dbReference type="ChEBI" id="CHEBI:76071"/>
    </reaction>
</comment>
<comment type="catalytic activity">
    <reaction evidence="6">
        <text>2-(9Z-octadecenoyl)-sn-glycero-3-phospho-L-serine + hexadecanoyl-CoA = 1-hexadecanoyl-2-(9Z-octadecenoyl)-sn-glycero-3-phospho-L-serine + CoA</text>
        <dbReference type="Rhea" id="RHEA:74815"/>
        <dbReference type="ChEBI" id="CHEBI:57287"/>
        <dbReference type="ChEBI" id="CHEBI:57379"/>
        <dbReference type="ChEBI" id="CHEBI:75029"/>
        <dbReference type="ChEBI" id="CHEBI:77342"/>
    </reaction>
</comment>
<comment type="catalytic activity">
    <reaction evidence="2">
        <text>2-(4Z,7Z,10Z,13Z,16Z,19Z-docosahexaenoyl)-sn-glycero-3-phosphocholine + octadecanoyl-CoA = 1-octadecanoyl-2-(4Z,7Z,10Z,13Z,16Z,19Z-docosahexaenoyl)-sn-glycero-3-phosphocholine + CoA</text>
        <dbReference type="Rhea" id="RHEA:74823"/>
        <dbReference type="ChEBI" id="CHEBI:57287"/>
        <dbReference type="ChEBI" id="CHEBI:57394"/>
        <dbReference type="ChEBI" id="CHEBI:76085"/>
        <dbReference type="ChEBI" id="CHEBI:84829"/>
    </reaction>
</comment>
<comment type="catalytic activity">
    <reaction evidence="2">
        <text>1-(9Z-octadecenoyl)-sn-glycero-3-phospho-L-serine + octadecanoyl-CoA = 1-(9Z-octadecenoyl)-2-octadecanoyl-sn-glycero-3-phospho-L-serine + CoA</text>
        <dbReference type="Rhea" id="RHEA:37403"/>
        <dbReference type="ChEBI" id="CHEBI:57287"/>
        <dbReference type="ChEBI" id="CHEBI:57394"/>
        <dbReference type="ChEBI" id="CHEBI:74617"/>
        <dbReference type="ChEBI" id="CHEBI:74902"/>
    </reaction>
</comment>
<comment type="catalytic activity">
    <reaction evidence="5">
        <text>a 2-acyl-sn-glycero-3-phosphoethanolamine + a fatty acyl-CoA = a 1,2-diacyl-sn-glycero-3-phosphoethanolamine + CoA</text>
        <dbReference type="Rhea" id="RHEA:70599"/>
        <dbReference type="ChEBI" id="CHEBI:57287"/>
        <dbReference type="ChEBI" id="CHEBI:64612"/>
        <dbReference type="ChEBI" id="CHEBI:65213"/>
        <dbReference type="ChEBI" id="CHEBI:77636"/>
    </reaction>
    <physiologicalReaction direction="left-to-right" evidence="11">
        <dbReference type="Rhea" id="RHEA:70600"/>
    </physiologicalReaction>
</comment>
<comment type="subcellular location">
    <subcellularLocation>
        <location evidence="2">Endoplasmic reticulum membrane</location>
        <topology evidence="2">Multi-pass membrane protein</topology>
    </subcellularLocation>
</comment>
<comment type="tissue specificity">
    <text evidence="4 5">Ubiquitous. Expressed in heart, kidney, liver, skin, intestine, and thymus. Highest expression is detected in brain and testis.</text>
</comment>
<comment type="domain">
    <text evidence="1">The HXXXXD motif is essential for acyltransferase activity and may constitute the binding site for the phosphate moiety of the glycerol-3-phosphate.</text>
</comment>
<comment type="disruption phenotype">
    <text evidence="5">Mice are born at the expected Mendelian frequency. They show reduced body fat and increased mortality during early adulthood with an average life span of about 5 months. Mutant mice produce poorly nutritional milk and are unable to nourish their litters leading in high pre-weaning mortality.</text>
</comment>
<comment type="similarity">
    <text evidence="9">Belongs to the 1-acyl-sn-glycerol-3-phosphate acyltransferase family.</text>
</comment>
<comment type="caution">
    <text evidence="5">The role in phosphatidylglycerols remodeling and cardiolipin synthesis is questioned as both processes occur in mitochondria. The monoacylglycerol acyltransferase activity is also weak and a direct role in triacylglycerol synthesis appears unlikely.</text>
</comment>
<protein>
    <recommendedName>
        <fullName evidence="9">Acyl-CoA:lysophosphatidylglycerol acyltransferase 1</fullName>
    </recommendedName>
    <alternativeName>
        <fullName>2-acylglycerophosphocholine O-acyltransferase</fullName>
        <ecNumber evidence="6">2.3.1.62</ecNumber>
    </alternativeName>
    <alternativeName>
        <fullName evidence="9">Acyl-CoA:monoacylglycerol acyltransferase LPGAT1</fullName>
        <ecNumber evidence="4">2.3.1.22</ecNumber>
    </alternativeName>
    <alternativeName>
        <fullName evidence="7">Lysophospholipid acyltransferase 7</fullName>
        <shortName evidence="7">LPLAT7</shortName>
        <ecNumber evidence="5">2.3.1.-</ecNumber>
    </alternativeName>
    <alternativeName>
        <fullName evidence="8">Stearoyl-CoA:1-lyso-2-acyl-PE acyltransferase</fullName>
    </alternativeName>
</protein>
<organism>
    <name type="scientific">Mus musculus</name>
    <name type="common">Mouse</name>
    <dbReference type="NCBI Taxonomy" id="10090"/>
    <lineage>
        <taxon>Eukaryota</taxon>
        <taxon>Metazoa</taxon>
        <taxon>Chordata</taxon>
        <taxon>Craniata</taxon>
        <taxon>Vertebrata</taxon>
        <taxon>Euteleostomi</taxon>
        <taxon>Mammalia</taxon>
        <taxon>Eutheria</taxon>
        <taxon>Euarchontoglires</taxon>
        <taxon>Glires</taxon>
        <taxon>Rodentia</taxon>
        <taxon>Myomorpha</taxon>
        <taxon>Muroidea</taxon>
        <taxon>Muridae</taxon>
        <taxon>Murinae</taxon>
        <taxon>Mus</taxon>
        <taxon>Mus</taxon>
    </lineage>
</organism>
<proteinExistence type="evidence at protein level"/>
<gene>
    <name evidence="12" type="primary">Lpgat1</name>
    <name type="synonym">Fam34a</name>
</gene>
<evidence type="ECO:0000250" key="1"/>
<evidence type="ECO:0000250" key="2">
    <source>
        <dbReference type="UniProtKB" id="Q92604"/>
    </source>
</evidence>
<evidence type="ECO:0000255" key="3"/>
<evidence type="ECO:0000269" key="4">
    <source>
    </source>
</evidence>
<evidence type="ECO:0000269" key="5">
    <source>
    </source>
</evidence>
<evidence type="ECO:0000269" key="6">
    <source>
    </source>
</evidence>
<evidence type="ECO:0000303" key="7">
    <source>
    </source>
</evidence>
<evidence type="ECO:0000303" key="8">
    <source>
    </source>
</evidence>
<evidence type="ECO:0000305" key="9"/>
<evidence type="ECO:0000305" key="10">
    <source>
    </source>
</evidence>
<evidence type="ECO:0000305" key="11">
    <source>
    </source>
</evidence>
<evidence type="ECO:0000312" key="12">
    <source>
        <dbReference type="MGI" id="MGI:2446186"/>
    </source>
</evidence>